<keyword id="KW-0002">3D-structure</keyword>
<keyword id="KW-0998">Cell outer membrane</keyword>
<keyword id="KW-0961">Cell wall biogenesis/degradation</keyword>
<keyword id="KW-0378">Hydrolase</keyword>
<keyword id="KW-0449">Lipoprotein</keyword>
<keyword id="KW-0472">Membrane</keyword>
<keyword id="KW-0564">Palmitate</keyword>
<keyword id="KW-0645">Protease</keyword>
<keyword id="KW-1185">Reference proteome</keyword>
<keyword id="KW-0732">Signal</keyword>
<keyword id="KW-0788">Thiol protease</keyword>
<proteinExistence type="evidence at protein level"/>
<evidence type="ECO:0000255" key="1">
    <source>
        <dbReference type="PROSITE-ProRule" id="PRU00303"/>
    </source>
</evidence>
<evidence type="ECO:0000255" key="2">
    <source>
        <dbReference type="PROSITE-ProRule" id="PRU01284"/>
    </source>
</evidence>
<evidence type="ECO:0000269" key="3">
    <source>
    </source>
</evidence>
<evidence type="ECO:0000269" key="4">
    <source>
    </source>
</evidence>
<evidence type="ECO:0000305" key="5"/>
<evidence type="ECO:0007829" key="6">
    <source>
        <dbReference type="PDB" id="7V6T"/>
    </source>
</evidence>
<evidence type="ECO:0007829" key="7">
    <source>
        <dbReference type="PDB" id="8XUP"/>
    </source>
</evidence>
<protein>
    <recommendedName>
        <fullName>Murein DD-endopeptidase MepS/Murein LD-carboxypeptidase</fullName>
        <ecNumber>3.4.-.-</ecNumber>
        <ecNumber>3.4.17.13</ecNumber>
    </recommendedName>
    <alternativeName>
        <fullName>Lipoprotein Spr</fullName>
    </alternativeName>
    <alternativeName>
        <fullName>Murein hydrolase MepS</fullName>
    </alternativeName>
</protein>
<reference key="1">
    <citation type="journal article" date="1996" name="Microb. Drug Resist.">
        <title>Overproduction of penicillin-binding protein 7 suppresses thermosensitive growth defect at low osmolarity due to an spr mutation of Escherichia coli.</title>
        <authorList>
            <person name="Hara H."/>
            <person name="Abe N."/>
            <person name="Nakakouji M."/>
            <person name="Nishimura Y."/>
            <person name="Horiuchi K."/>
        </authorList>
    </citation>
    <scope>NUCLEOTIDE SEQUENCE [GENOMIC DNA]</scope>
    <scope>FUNCTION</scope>
    <scope>DISRUPTION PHENOTYPE</scope>
    <source>
        <strain>K12 / W3110 / ATCC 27325 / DSM 5911</strain>
    </source>
</reference>
<reference key="2">
    <citation type="journal article" date="1996" name="DNA Res.">
        <title>A 460-kb DNA sequence of the Escherichia coli K-12 genome corresponding to the 40.1-50.0 min region on the linkage map.</title>
        <authorList>
            <person name="Itoh T."/>
            <person name="Aiba H."/>
            <person name="Baba T."/>
            <person name="Fujita K."/>
            <person name="Hayashi K."/>
            <person name="Inada T."/>
            <person name="Isono K."/>
            <person name="Kasai H."/>
            <person name="Kimura S."/>
            <person name="Kitakawa M."/>
            <person name="Kitagawa M."/>
            <person name="Makino K."/>
            <person name="Miki T."/>
            <person name="Mizobuchi K."/>
            <person name="Mori H."/>
            <person name="Mori T."/>
            <person name="Motomura K."/>
            <person name="Nakade S."/>
            <person name="Nakamura Y."/>
            <person name="Nashimoto H."/>
            <person name="Nishio Y."/>
            <person name="Oshima T."/>
            <person name="Saito N."/>
            <person name="Sampei G."/>
            <person name="Seki Y."/>
            <person name="Sivasundaram S."/>
            <person name="Tagami H."/>
            <person name="Takeda J."/>
            <person name="Takemoto K."/>
            <person name="Wada C."/>
            <person name="Yamamoto Y."/>
            <person name="Horiuchi T."/>
        </authorList>
    </citation>
    <scope>NUCLEOTIDE SEQUENCE [LARGE SCALE GENOMIC DNA]</scope>
    <source>
        <strain>K12 / W3110 / ATCC 27325 / DSM 5911</strain>
    </source>
</reference>
<reference key="3">
    <citation type="journal article" date="1997" name="Science">
        <title>The complete genome sequence of Escherichia coli K-12.</title>
        <authorList>
            <person name="Blattner F.R."/>
            <person name="Plunkett G. III"/>
            <person name="Bloch C.A."/>
            <person name="Perna N.T."/>
            <person name="Burland V."/>
            <person name="Riley M."/>
            <person name="Collado-Vides J."/>
            <person name="Glasner J.D."/>
            <person name="Rode C.K."/>
            <person name="Mayhew G.F."/>
            <person name="Gregor J."/>
            <person name="Davis N.W."/>
            <person name="Kirkpatrick H.A."/>
            <person name="Goeden M.A."/>
            <person name="Rose D.J."/>
            <person name="Mau B."/>
            <person name="Shao Y."/>
        </authorList>
    </citation>
    <scope>NUCLEOTIDE SEQUENCE [LARGE SCALE GENOMIC DNA]</scope>
    <source>
        <strain>K12 / MG1655 / ATCC 47076</strain>
    </source>
</reference>
<reference key="4">
    <citation type="journal article" date="2006" name="Mol. Syst. Biol.">
        <title>Highly accurate genome sequences of Escherichia coli K-12 strains MG1655 and W3110.</title>
        <authorList>
            <person name="Hayashi K."/>
            <person name="Morooka N."/>
            <person name="Yamamoto Y."/>
            <person name="Fujita K."/>
            <person name="Isono K."/>
            <person name="Choi S."/>
            <person name="Ohtsubo E."/>
            <person name="Baba T."/>
            <person name="Wanner B.L."/>
            <person name="Mori H."/>
            <person name="Horiuchi T."/>
        </authorList>
    </citation>
    <scope>NUCLEOTIDE SEQUENCE [LARGE SCALE GENOMIC DNA]</scope>
    <source>
        <strain>K12 / W3110 / ATCC 27325 / DSM 5911</strain>
    </source>
</reference>
<reference key="5">
    <citation type="journal article" date="2012" name="Mol. Microbiol.">
        <title>Three redundant murein endopeptidases catalyse an essential cleavage step in peptidoglycan synthesis of Escherichia coli K12.</title>
        <authorList>
            <person name="Singh S.K."/>
            <person name="SaiSree L."/>
            <person name="Amrutha R.N."/>
            <person name="Reddy M."/>
        </authorList>
    </citation>
    <scope>FUNCTION AS A MUREIN DD-ENDOPEPTIDASE</scope>
    <scope>DISRUPTION PHENOTYPE</scope>
    <scope>MUTAGENESIS OF CYS-94</scope>
    <source>
        <strain>K12</strain>
    </source>
</reference>
<reference key="6">
    <citation type="journal article" date="2008" name="Biochemistry">
        <title>Solution NMR structure of the NlpC/P60 domain of lipoprotein Spr from Escherichia coli: structural evidence for a novel cysteine peptidase catalytic triad.</title>
        <authorList>
            <person name="Aramini J.M."/>
            <person name="Rossi P."/>
            <person name="Huang Y.J."/>
            <person name="Zhao L."/>
            <person name="Jiang M."/>
            <person name="Maglaqui M."/>
            <person name="Xiao R."/>
            <person name="Locke J."/>
            <person name="Nair R."/>
            <person name="Rost B."/>
            <person name="Acton T.B."/>
            <person name="Inouye M."/>
            <person name="Montelione G.T."/>
        </authorList>
    </citation>
    <scope>STRUCTURE BY NMR OF 63-188</scope>
    <scope>PROBABLE ACTIVE SITE</scope>
    <scope>PROBABLE SUBUNIT</scope>
</reference>
<feature type="signal peptide" evidence="1">
    <location>
        <begin position="1"/>
        <end position="26"/>
    </location>
</feature>
<feature type="chain" id="PRO_0000019763" description="Murein DD-endopeptidase MepS/Murein LD-carboxypeptidase">
    <location>
        <begin position="27"/>
        <end position="188"/>
    </location>
</feature>
<feature type="domain" description="NlpC/P60" evidence="2">
    <location>
        <begin position="64"/>
        <end position="185"/>
    </location>
</feature>
<feature type="active site" description="Nucleophile" evidence="2">
    <location>
        <position position="94"/>
    </location>
</feature>
<feature type="active site" description="Proton acceptor" evidence="2">
    <location>
        <position position="145"/>
    </location>
</feature>
<feature type="active site" evidence="2">
    <location>
        <position position="157"/>
    </location>
</feature>
<feature type="lipid moiety-binding region" description="N-palmitoyl cysteine" evidence="1">
    <location>
        <position position="27"/>
    </location>
</feature>
<feature type="lipid moiety-binding region" description="S-diacylglycerol cysteine" evidence="1">
    <location>
        <position position="27"/>
    </location>
</feature>
<feature type="mutagenesis site" description="Loss of DD-endopeptidase activity, no complementation of double mepS-mepM deletion mutants." evidence="3">
    <original>C</original>
    <variation>A</variation>
    <location>
        <position position="94"/>
    </location>
</feature>
<feature type="helix" evidence="7">
    <location>
        <begin position="49"/>
        <end position="51"/>
    </location>
</feature>
<feature type="helix" evidence="7">
    <location>
        <begin position="54"/>
        <end position="63"/>
    </location>
</feature>
<feature type="helix" evidence="6">
    <location>
        <begin position="66"/>
        <end position="77"/>
    </location>
</feature>
<feature type="helix" evidence="6">
    <location>
        <begin position="94"/>
        <end position="106"/>
    </location>
</feature>
<feature type="helix" evidence="6">
    <location>
        <begin position="114"/>
        <end position="117"/>
    </location>
</feature>
<feature type="strand" evidence="6">
    <location>
        <begin position="120"/>
        <end position="124"/>
    </location>
</feature>
<feature type="helix" evidence="6">
    <location>
        <begin position="126"/>
        <end position="128"/>
    </location>
</feature>
<feature type="strand" evidence="6">
    <location>
        <begin position="134"/>
        <end position="137"/>
    </location>
</feature>
<feature type="turn" evidence="6">
    <location>
        <begin position="140"/>
        <end position="143"/>
    </location>
</feature>
<feature type="strand" evidence="6">
    <location>
        <begin position="145"/>
        <end position="151"/>
    </location>
</feature>
<feature type="strand" evidence="6">
    <location>
        <begin position="154"/>
        <end position="159"/>
    </location>
</feature>
<feature type="turn" evidence="6">
    <location>
        <begin position="160"/>
        <end position="162"/>
    </location>
</feature>
<feature type="strand" evidence="6">
    <location>
        <begin position="163"/>
        <end position="168"/>
    </location>
</feature>
<feature type="helix" evidence="6">
    <location>
        <begin position="172"/>
        <end position="177"/>
    </location>
</feature>
<feature type="strand" evidence="6">
    <location>
        <begin position="178"/>
        <end position="183"/>
    </location>
</feature>
<sequence>MVKSQPILRYILRGIPAIAVAVLLSACSANNTAKNMHPETRAVGSETSSLQASQDEFENLVRNVDVKSRIMDQYADWKGVRYRLGGSTKKGIDCSGFVQRTFREQFGLELPRSTYEQQEMGKSVSRSNLRTGDLVLFRAGSTGRHVGIYIGNNQFVHASTSSGVIISSMNEPYWKKRYNEARRVLSRS</sequence>
<organism>
    <name type="scientific">Escherichia coli (strain K12)</name>
    <dbReference type="NCBI Taxonomy" id="83333"/>
    <lineage>
        <taxon>Bacteria</taxon>
        <taxon>Pseudomonadati</taxon>
        <taxon>Pseudomonadota</taxon>
        <taxon>Gammaproteobacteria</taxon>
        <taxon>Enterobacterales</taxon>
        <taxon>Enterobacteriaceae</taxon>
        <taxon>Escherichia</taxon>
    </lineage>
</organism>
<name>MEPS_ECOLI</name>
<gene>
    <name type="primary">mepS</name>
    <name type="synonym">spr</name>
    <name type="synonym">yeiV</name>
    <name type="ordered locus">b2175</name>
    <name type="ordered locus">JW2163</name>
</gene>
<comment type="function">
    <text evidence="3 4">A murein DD-endopeptidase with specificity for D-Ala-meso-diaminopimelic acid (mDAP) cross-links. Its role is probably to cleave D-Ala-mDAP cross-links to allow insertion of new glycans and thus cell wall expansion. Functionally redundant with MepM and MepH. Also has weak LD-carboxypeptidase activity on L-mDAP-D-Ala peptide bonds. Partially suppresses a prc disruption mutant.</text>
</comment>
<comment type="catalytic activity">
    <reaction>
        <text>N-acetyl-D-glucosaminyl-N-acetylmuramoyl-L-alanyl-meso-2,6-diaminoheptanedioyl-D-alanine + H2O = N-acetyl-D-glucosaminyl-N-acetylmuramoyl-L-alanyl-meso-2,6-diaminoheptanedioate + D-alanine</text>
        <dbReference type="Rhea" id="RHEA:48688"/>
        <dbReference type="ChEBI" id="CHEBI:15377"/>
        <dbReference type="ChEBI" id="CHEBI:57416"/>
        <dbReference type="ChEBI" id="CHEBI:233808"/>
        <dbReference type="ChEBI" id="CHEBI:233809"/>
        <dbReference type="EC" id="3.4.17.13"/>
    </reaction>
</comment>
<comment type="pathway">
    <text>Cell wall biogenesis; cell wall polysaccharide biosynthesis.</text>
</comment>
<comment type="subunit">
    <text evidence="5">Monomer.</text>
</comment>
<comment type="subcellular location">
    <subcellularLocation>
        <location evidence="5">Cell outer membrane</location>
        <topology evidence="1">Lipid-anchor</topology>
    </subcellularLocation>
</comment>
<comment type="disruption phenotype">
    <text evidence="3 4">Unable to grow on nutrient agar at 42 degrees Celsius. A triple mepS-mepH-mepM mutant is inviable, whereas a double mepS-mepM will grow on a nutrient-poor medium but not on a rich medium, suggesting the 3 endopeptidases are functionally redundant in vivo. Depletion experiments of the double or triple mutants lead to cell lysis, as well as significantly decreased incorporation of mDAP into peptidoglycan sacculi and increased amounts of the enzyme's substrate (Tetra-Tetra-anhydro muropeptide).</text>
</comment>
<comment type="similarity">
    <text evidence="2 5">Belongs to the peptidase C40 family.</text>
</comment>
<dbReference type="EC" id="3.4.-.-"/>
<dbReference type="EC" id="3.4.17.13"/>
<dbReference type="EMBL" id="D86610">
    <property type="protein sequence ID" value="BAA13140.1"/>
    <property type="molecule type" value="Genomic_DNA"/>
</dbReference>
<dbReference type="EMBL" id="U00096">
    <property type="protein sequence ID" value="AAC75236.1"/>
    <property type="molecule type" value="Genomic_DNA"/>
</dbReference>
<dbReference type="EMBL" id="AP009048">
    <property type="protein sequence ID" value="BAA15983.1"/>
    <property type="molecule type" value="Genomic_DNA"/>
</dbReference>
<dbReference type="PIR" id="F64986">
    <property type="entry name" value="F64986"/>
</dbReference>
<dbReference type="RefSeq" id="NP_416680.1">
    <property type="nucleotide sequence ID" value="NC_000913.3"/>
</dbReference>
<dbReference type="RefSeq" id="WP_000241011.1">
    <property type="nucleotide sequence ID" value="NZ_STEB01000002.1"/>
</dbReference>
<dbReference type="PDB" id="2K1G">
    <property type="method" value="NMR"/>
    <property type="chains" value="A=63-188"/>
</dbReference>
<dbReference type="PDB" id="7V6S">
    <property type="method" value="X-ray"/>
    <property type="resolution" value="1.88 A"/>
    <property type="chains" value="A/B=61-188"/>
</dbReference>
<dbReference type="PDB" id="7V6T">
    <property type="method" value="X-ray"/>
    <property type="resolution" value="1.50 A"/>
    <property type="chains" value="A/B=61-188"/>
</dbReference>
<dbReference type="PDB" id="7V6U">
    <property type="method" value="X-ray"/>
    <property type="resolution" value="2.14 A"/>
    <property type="chains" value="A/B=61-188"/>
</dbReference>
<dbReference type="PDB" id="8XUD">
    <property type="method" value="X-ray"/>
    <property type="resolution" value="3.49 A"/>
    <property type="chains" value="I/J/K/L=28-188"/>
</dbReference>
<dbReference type="PDB" id="8XUP">
    <property type="method" value="X-ray"/>
    <property type="resolution" value="2.80 A"/>
    <property type="chains" value="E/F/G/H/I/J/K/L=28-188"/>
</dbReference>
<dbReference type="PDBsum" id="2K1G"/>
<dbReference type="PDBsum" id="7V6S"/>
<dbReference type="PDBsum" id="7V6T"/>
<dbReference type="PDBsum" id="7V6U"/>
<dbReference type="PDBsum" id="8XUD"/>
<dbReference type="PDBsum" id="8XUP"/>
<dbReference type="BMRB" id="P0AFV4"/>
<dbReference type="SASBDB" id="P0AFV4"/>
<dbReference type="SMR" id="P0AFV4"/>
<dbReference type="BioGRID" id="4261093">
    <property type="interactions" value="204"/>
</dbReference>
<dbReference type="FunCoup" id="P0AFV4">
    <property type="interactions" value="26"/>
</dbReference>
<dbReference type="IntAct" id="P0AFV4">
    <property type="interactions" value="8"/>
</dbReference>
<dbReference type="STRING" id="511145.b2175"/>
<dbReference type="MEROPS" id="C40.004"/>
<dbReference type="PaxDb" id="511145-b2175"/>
<dbReference type="EnsemblBacteria" id="AAC75236">
    <property type="protein sequence ID" value="AAC75236"/>
    <property type="gene ID" value="b2175"/>
</dbReference>
<dbReference type="GeneID" id="93775006"/>
<dbReference type="GeneID" id="946686"/>
<dbReference type="KEGG" id="ecj:JW2163"/>
<dbReference type="KEGG" id="eco:b2175"/>
<dbReference type="KEGG" id="ecoc:C3026_12170"/>
<dbReference type="PATRIC" id="fig|511145.12.peg.2263"/>
<dbReference type="EchoBASE" id="EB3829"/>
<dbReference type="eggNOG" id="COG0791">
    <property type="taxonomic scope" value="Bacteria"/>
</dbReference>
<dbReference type="HOGENOM" id="CLU_016043_9_1_6"/>
<dbReference type="InParanoid" id="P0AFV4"/>
<dbReference type="OMA" id="MHAVNDK"/>
<dbReference type="OrthoDB" id="9807055at2"/>
<dbReference type="PhylomeDB" id="P0AFV4"/>
<dbReference type="BioCyc" id="EcoCyc:G7147-MONOMER"/>
<dbReference type="BioCyc" id="MetaCyc:G7147-MONOMER"/>
<dbReference type="UniPathway" id="UPA00963"/>
<dbReference type="EvolutionaryTrace" id="P0AFV4"/>
<dbReference type="PHI-base" id="PHI:11093"/>
<dbReference type="PRO" id="PR:P0AFV4"/>
<dbReference type="Proteomes" id="UP000000625">
    <property type="component" value="Chromosome"/>
</dbReference>
<dbReference type="GO" id="GO:0009279">
    <property type="term" value="C:cell outer membrane"/>
    <property type="evidence" value="ECO:0007669"/>
    <property type="project" value="UniProtKB-SubCell"/>
</dbReference>
<dbReference type="GO" id="GO:0008234">
    <property type="term" value="F:cysteine-type peptidase activity"/>
    <property type="evidence" value="ECO:0007669"/>
    <property type="project" value="UniProtKB-KW"/>
</dbReference>
<dbReference type="GO" id="GO:0004175">
    <property type="term" value="F:endopeptidase activity"/>
    <property type="evidence" value="ECO:0000314"/>
    <property type="project" value="EcoCyc"/>
</dbReference>
<dbReference type="GO" id="GO:0106415">
    <property type="term" value="F:muramoyltetrapeptide carboxypeptidase activity"/>
    <property type="evidence" value="ECO:0007669"/>
    <property type="project" value="UniProtKB-EC"/>
</dbReference>
<dbReference type="GO" id="GO:0045227">
    <property type="term" value="P:capsule polysaccharide biosynthetic process"/>
    <property type="evidence" value="ECO:0007669"/>
    <property type="project" value="UniProtKB-UniPathway"/>
</dbReference>
<dbReference type="GO" id="GO:0071555">
    <property type="term" value="P:cell wall organization"/>
    <property type="evidence" value="ECO:0007669"/>
    <property type="project" value="UniProtKB-KW"/>
</dbReference>
<dbReference type="GO" id="GO:0000270">
    <property type="term" value="P:peptidoglycan metabolic process"/>
    <property type="evidence" value="ECO:0000314"/>
    <property type="project" value="EcoCyc"/>
</dbReference>
<dbReference type="GO" id="GO:0009254">
    <property type="term" value="P:peptidoglycan turnover"/>
    <property type="evidence" value="ECO:0000315"/>
    <property type="project" value="CACAO"/>
</dbReference>
<dbReference type="GO" id="GO:0006508">
    <property type="term" value="P:proteolysis"/>
    <property type="evidence" value="ECO:0007669"/>
    <property type="project" value="UniProtKB-KW"/>
</dbReference>
<dbReference type="FunFam" id="3.90.1720.10:FF:000001">
    <property type="entry name" value="Bifunctional murein DD-endopeptidase/murein LD-carboxypeptidase"/>
    <property type="match status" value="1"/>
</dbReference>
<dbReference type="Gene3D" id="3.90.1720.10">
    <property type="entry name" value="endopeptidase domain like (from Nostoc punctiforme)"/>
    <property type="match status" value="1"/>
</dbReference>
<dbReference type="InterPro" id="IPR052062">
    <property type="entry name" value="Murein_DD/LD_carboxypeptidase"/>
</dbReference>
<dbReference type="InterPro" id="IPR000064">
    <property type="entry name" value="NLP_P60_dom"/>
</dbReference>
<dbReference type="InterPro" id="IPR038765">
    <property type="entry name" value="Papain-like_cys_pep_sf"/>
</dbReference>
<dbReference type="NCBIfam" id="NF008096">
    <property type="entry name" value="PRK10838.1"/>
    <property type="match status" value="1"/>
</dbReference>
<dbReference type="PANTHER" id="PTHR47360">
    <property type="entry name" value="MUREIN DD-ENDOPEPTIDASE MEPS/MUREIN LD-CARBOXYPEPTIDASE"/>
    <property type="match status" value="1"/>
</dbReference>
<dbReference type="PANTHER" id="PTHR47360:SF3">
    <property type="entry name" value="MUREIN DD-ENDOPEPTIDASE MEPS_MUREIN LD-CARBOXYPEPTIDASE"/>
    <property type="match status" value="1"/>
</dbReference>
<dbReference type="Pfam" id="PF00877">
    <property type="entry name" value="NLPC_P60"/>
    <property type="match status" value="1"/>
</dbReference>
<dbReference type="SUPFAM" id="SSF54001">
    <property type="entry name" value="Cysteine proteinases"/>
    <property type="match status" value="1"/>
</dbReference>
<dbReference type="PROSITE" id="PS51935">
    <property type="entry name" value="NLPC_P60"/>
    <property type="match status" value="1"/>
</dbReference>
<dbReference type="PROSITE" id="PS51257">
    <property type="entry name" value="PROKAR_LIPOPROTEIN"/>
    <property type="match status" value="1"/>
</dbReference>
<accession>P0AFV4</accession>
<accession>O08016</accession>
<accession>P77685</accession>